<organism>
    <name type="scientific">Caldicellulosiruptor bescii (strain ATCC BAA-1888 / DSM 6725 / KCTC 15123 / Z-1320)</name>
    <name type="common">Anaerocellum thermophilum</name>
    <dbReference type="NCBI Taxonomy" id="521460"/>
    <lineage>
        <taxon>Bacteria</taxon>
        <taxon>Bacillati</taxon>
        <taxon>Bacillota</taxon>
        <taxon>Bacillota incertae sedis</taxon>
        <taxon>Caldicellulosiruptorales</taxon>
        <taxon>Caldicellulosiruptoraceae</taxon>
        <taxon>Caldicellulosiruptor</taxon>
    </lineage>
</organism>
<reference key="1">
    <citation type="submission" date="1996-02" db="EMBL/GenBank/DDBJ databases">
        <authorList>
            <person name="Zverlov V.V."/>
            <person name="Bronnenmeier K."/>
            <person name="Velikodvorskaya G.A."/>
        </authorList>
    </citation>
    <scope>NUCLEOTIDE SEQUENCE [GENOMIC DNA]</scope>
</reference>
<reference key="2">
    <citation type="submission" date="2009-01" db="EMBL/GenBank/DDBJ databases">
        <title>Complete sequence of chromosome of Caldicellulosiruptor becscii DSM 6725.</title>
        <authorList>
            <person name="Lucas S."/>
            <person name="Copeland A."/>
            <person name="Lapidus A."/>
            <person name="Glavina del Rio T."/>
            <person name="Tice H."/>
            <person name="Bruce D."/>
            <person name="Goodwin L."/>
            <person name="Pitluck S."/>
            <person name="Sims D."/>
            <person name="Meincke L."/>
            <person name="Brettin T."/>
            <person name="Detter J.C."/>
            <person name="Han C."/>
            <person name="Larimer F."/>
            <person name="Land M."/>
            <person name="Hauser L."/>
            <person name="Kyrpides N."/>
            <person name="Ovchinnikova G."/>
            <person name="Kataeva I."/>
            <person name="Adams M.W.W."/>
        </authorList>
    </citation>
    <scope>NUCLEOTIDE SEQUENCE [LARGE SCALE GENOMIC DNA]</scope>
    <source>
        <strain>ATCC BAA-1888 / DSM 6725 / KCTC 15123 / Z-1320</strain>
    </source>
</reference>
<protein>
    <recommendedName>
        <fullName>Xylose repressor</fullName>
    </recommendedName>
</protein>
<dbReference type="EMBL" id="Z69782">
    <property type="protein sequence ID" value="CAA93626.1"/>
    <property type="molecule type" value="Genomic_DNA"/>
</dbReference>
<dbReference type="EMBL" id="CP001393">
    <property type="protein sequence ID" value="ACM59741.1"/>
    <property type="molecule type" value="Genomic_DNA"/>
</dbReference>
<dbReference type="RefSeq" id="WP_015907194.1">
    <property type="nucleotide sequence ID" value="NC_012034.1"/>
</dbReference>
<dbReference type="SMR" id="Q44406"/>
<dbReference type="STRING" id="521460.Athe_0617"/>
<dbReference type="GeneID" id="31771972"/>
<dbReference type="KEGG" id="ate:Athe_0617"/>
<dbReference type="eggNOG" id="COG1940">
    <property type="taxonomic scope" value="Bacteria"/>
</dbReference>
<dbReference type="HOGENOM" id="CLU_036604_13_5_9"/>
<dbReference type="Proteomes" id="UP000007723">
    <property type="component" value="Chromosome"/>
</dbReference>
<dbReference type="GO" id="GO:0003677">
    <property type="term" value="F:DNA binding"/>
    <property type="evidence" value="ECO:0007669"/>
    <property type="project" value="UniProtKB-KW"/>
</dbReference>
<dbReference type="GO" id="GO:0042732">
    <property type="term" value="P:D-xylose metabolic process"/>
    <property type="evidence" value="ECO:0007669"/>
    <property type="project" value="UniProtKB-KW"/>
</dbReference>
<dbReference type="CDD" id="cd24076">
    <property type="entry name" value="ASKHA_ATPase_ROK_BsXylR-like"/>
    <property type="match status" value="1"/>
</dbReference>
<dbReference type="Gene3D" id="3.30.420.40">
    <property type="match status" value="2"/>
</dbReference>
<dbReference type="Gene3D" id="1.10.10.10">
    <property type="entry name" value="Winged helix-like DNA-binding domain superfamily/Winged helix DNA-binding domain"/>
    <property type="match status" value="1"/>
</dbReference>
<dbReference type="InterPro" id="IPR043129">
    <property type="entry name" value="ATPase_NBD"/>
</dbReference>
<dbReference type="InterPro" id="IPR000600">
    <property type="entry name" value="ROK"/>
</dbReference>
<dbReference type="InterPro" id="IPR049874">
    <property type="entry name" value="ROK_cs"/>
</dbReference>
<dbReference type="InterPro" id="IPR036388">
    <property type="entry name" value="WH-like_DNA-bd_sf"/>
</dbReference>
<dbReference type="InterPro" id="IPR036390">
    <property type="entry name" value="WH_DNA-bd_sf"/>
</dbReference>
<dbReference type="PANTHER" id="PTHR18964:SF149">
    <property type="entry name" value="BIFUNCTIONAL UDP-N-ACETYLGLUCOSAMINE 2-EPIMERASE_N-ACETYLMANNOSAMINE KINASE"/>
    <property type="match status" value="1"/>
</dbReference>
<dbReference type="PANTHER" id="PTHR18964">
    <property type="entry name" value="ROK (REPRESSOR, ORF, KINASE) FAMILY"/>
    <property type="match status" value="1"/>
</dbReference>
<dbReference type="Pfam" id="PF00480">
    <property type="entry name" value="ROK"/>
    <property type="match status" value="1"/>
</dbReference>
<dbReference type="SUPFAM" id="SSF53067">
    <property type="entry name" value="Actin-like ATPase domain"/>
    <property type="match status" value="1"/>
</dbReference>
<dbReference type="SUPFAM" id="SSF46785">
    <property type="entry name" value="Winged helix' DNA-binding domain"/>
    <property type="match status" value="1"/>
</dbReference>
<dbReference type="PROSITE" id="PS01125">
    <property type="entry name" value="ROK"/>
    <property type="match status" value="1"/>
</dbReference>
<accession>Q44406</accession>
<accession>B9MPI0</accession>
<feature type="chain" id="PRO_0000095709" description="Xylose repressor">
    <location>
        <begin position="1"/>
        <end position="399"/>
    </location>
</feature>
<feature type="DNA-binding region" description="H-T-H motif" evidence="1">
    <location>
        <begin position="27"/>
        <end position="46"/>
    </location>
</feature>
<comment type="function">
    <text>Transcriptional repressor of xylose-utilizing enzymes.</text>
</comment>
<comment type="similarity">
    <text evidence="2">Belongs to the ROK (NagC/XylR) family.</text>
</comment>
<proteinExistence type="inferred from homology"/>
<gene>
    <name type="primary">xylR</name>
    <name type="ordered locus">Athe_0617</name>
</gene>
<keyword id="KW-0119">Carbohydrate metabolism</keyword>
<keyword id="KW-0238">DNA-binding</keyword>
<keyword id="KW-0678">Repressor</keyword>
<keyword id="KW-0804">Transcription</keyword>
<keyword id="KW-0805">Transcription regulation</keyword>
<keyword id="KW-0859">Xylose metabolism</keyword>
<name>XYLR_CALBD</name>
<sequence>MGNHTLLKQINKLLVLKTILDNKIISRTKISKLVDLNKATVSNLTDELIKEGYVVEKGYGKSKGGRRPVLLQVNKDVGSIIGIDLGVDYIHIILSNFVGEVIFEEYANMKIGEDKEKLLRLLFDLIEKSVKKAPQTPKGILGIGIGVPGIIEKESGTVLLAPNLKWQNVPLRSIVQQKFNLPVYIDNEANAGALGEKWFGEWGKVSDLIYLSVGIGLGAGIIIDNKLFRGAAGFAGEVGHTTINFQDDVCSCGNIGCLENFASERALLSVIKKLVKQGVEDRYISWENVDEITPSRIIQAAKEGSRVCRMAILEVAEKMGIGVANLVNIFNPEMVIIGNKASFFGELFLEKLREVINQRSFIAQFYNLKIEVSKLKDRAVVLGCIAMVISDMLSFPEYA</sequence>
<evidence type="ECO:0000250" key="1"/>
<evidence type="ECO:0000305" key="2"/>